<dbReference type="EMBL" id="AE000516">
    <property type="protein sequence ID" value="AAK45805.1"/>
    <property type="molecule type" value="Genomic_DNA"/>
</dbReference>
<dbReference type="PIR" id="F70711">
    <property type="entry name" value="F70711"/>
</dbReference>
<dbReference type="RefSeq" id="WP_003407583.1">
    <property type="nucleotide sequence ID" value="NZ_KK341227.1"/>
</dbReference>
<dbReference type="KEGG" id="mtc:MT1538"/>
<dbReference type="PATRIC" id="fig|83331.31.peg.1655"/>
<dbReference type="HOGENOM" id="CLU_038944_4_0_11"/>
<dbReference type="Proteomes" id="UP000001020">
    <property type="component" value="Chromosome"/>
</dbReference>
<dbReference type="GO" id="GO:0005886">
    <property type="term" value="C:plasma membrane"/>
    <property type="evidence" value="ECO:0007669"/>
    <property type="project" value="UniProtKB-SubCell"/>
</dbReference>
<dbReference type="InterPro" id="IPR015414">
    <property type="entry name" value="TMEM64"/>
</dbReference>
<dbReference type="InterPro" id="IPR032816">
    <property type="entry name" value="VTT_dom"/>
</dbReference>
<dbReference type="PANTHER" id="PTHR12677">
    <property type="entry name" value="GOLGI APPARATUS MEMBRANE PROTEIN TVP38-RELATED"/>
    <property type="match status" value="1"/>
</dbReference>
<dbReference type="PANTHER" id="PTHR12677:SF59">
    <property type="entry name" value="GOLGI APPARATUS MEMBRANE PROTEIN TVP38-RELATED"/>
    <property type="match status" value="1"/>
</dbReference>
<dbReference type="Pfam" id="PF09335">
    <property type="entry name" value="VTT_dom"/>
    <property type="match status" value="1"/>
</dbReference>
<name>Y1491_MYCTO</name>
<organism>
    <name type="scientific">Mycobacterium tuberculosis (strain CDC 1551 / Oshkosh)</name>
    <dbReference type="NCBI Taxonomy" id="83331"/>
    <lineage>
        <taxon>Bacteria</taxon>
        <taxon>Bacillati</taxon>
        <taxon>Actinomycetota</taxon>
        <taxon>Actinomycetes</taxon>
        <taxon>Mycobacteriales</taxon>
        <taxon>Mycobacteriaceae</taxon>
        <taxon>Mycobacterium</taxon>
        <taxon>Mycobacterium tuberculosis complex</taxon>
    </lineage>
</organism>
<sequence>MTAPAICNTTETVHGIATSLGAVARQASLPRIVGTVVGITVLVVVALLVPVPTAVELRDWAKSLGAWFPLAFLLVHTVVTVPPFPRTAFTLAAGLLFGSVVGVFIAVVGSTASAVIAMLLVRATGWQLNSLVRRRAINRLDERLRERGWLAILSLRLIPVVPFAAINYAAGASGVRILSFAWATLAGLLPGTAAVVILGDAFAGSGSPLLILVSVCTGALGLTGLVYEIRNYRRQHRRMPGYDDPVREPALI</sequence>
<evidence type="ECO:0000255" key="1"/>
<evidence type="ECO:0000305" key="2"/>
<reference key="1">
    <citation type="journal article" date="2002" name="J. Bacteriol.">
        <title>Whole-genome comparison of Mycobacterium tuberculosis clinical and laboratory strains.</title>
        <authorList>
            <person name="Fleischmann R.D."/>
            <person name="Alland D."/>
            <person name="Eisen J.A."/>
            <person name="Carpenter L."/>
            <person name="White O."/>
            <person name="Peterson J.D."/>
            <person name="DeBoy R.T."/>
            <person name="Dodson R.J."/>
            <person name="Gwinn M.L."/>
            <person name="Haft D.H."/>
            <person name="Hickey E.K."/>
            <person name="Kolonay J.F."/>
            <person name="Nelson W.C."/>
            <person name="Umayam L.A."/>
            <person name="Ermolaeva M.D."/>
            <person name="Salzberg S.L."/>
            <person name="Delcher A."/>
            <person name="Utterback T.R."/>
            <person name="Weidman J.F."/>
            <person name="Khouri H.M."/>
            <person name="Gill J."/>
            <person name="Mikula A."/>
            <person name="Bishai W."/>
            <person name="Jacobs W.R. Jr."/>
            <person name="Venter J.C."/>
            <person name="Fraser C.M."/>
        </authorList>
    </citation>
    <scope>NUCLEOTIDE SEQUENCE [LARGE SCALE GENOMIC DNA]</scope>
    <source>
        <strain>CDC 1551 / Oshkosh</strain>
    </source>
</reference>
<accession>P9WFS2</accession>
<accession>L0T706</accession>
<accession>P67117</accession>
<accession>P71772</accession>
<proteinExistence type="inferred from homology"/>
<feature type="chain" id="PRO_0000428487" description="TVP38/TMEM64 family membrane protein MT1538">
    <location>
        <begin position="1"/>
        <end position="252"/>
    </location>
</feature>
<feature type="transmembrane region" description="Helical" evidence="1">
    <location>
        <begin position="32"/>
        <end position="52"/>
    </location>
</feature>
<feature type="transmembrane region" description="Helical" evidence="1">
    <location>
        <begin position="64"/>
        <end position="84"/>
    </location>
</feature>
<feature type="transmembrane region" description="Helical" evidence="1">
    <location>
        <begin position="88"/>
        <end position="108"/>
    </location>
</feature>
<feature type="transmembrane region" description="Helical" evidence="1">
    <location>
        <begin position="149"/>
        <end position="169"/>
    </location>
</feature>
<feature type="transmembrane region" description="Helical" evidence="1">
    <location>
        <begin position="177"/>
        <end position="197"/>
    </location>
</feature>
<feature type="transmembrane region" description="Helical" evidence="1">
    <location>
        <begin position="209"/>
        <end position="229"/>
    </location>
</feature>
<gene>
    <name type="ordered locus">MT1538</name>
</gene>
<keyword id="KW-1003">Cell membrane</keyword>
<keyword id="KW-0472">Membrane</keyword>
<keyword id="KW-1185">Reference proteome</keyword>
<keyword id="KW-0812">Transmembrane</keyword>
<keyword id="KW-1133">Transmembrane helix</keyword>
<comment type="subcellular location">
    <subcellularLocation>
        <location evidence="2">Cell membrane</location>
        <topology evidence="2">Multi-pass membrane protein</topology>
    </subcellularLocation>
</comment>
<comment type="similarity">
    <text evidence="2">Belongs to the TVP38/TMEM64 family.</text>
</comment>
<protein>
    <recommendedName>
        <fullName>TVP38/TMEM64 family membrane protein MT1538</fullName>
    </recommendedName>
</protein>